<feature type="chain" id="PRO_0000451880" description="CD-NTase-associated protein 12">
    <location>
        <begin position="1"/>
        <end position="312"/>
    </location>
</feature>
<feature type="domain" description="TIR" evidence="2 7">
    <location>
        <begin position="5"/>
        <end position="127"/>
    </location>
</feature>
<organism>
    <name type="scientific">Niabella drilacis (strain DSM 25811 / CCM 8410 / CCUG 62505 / LMG 26954 / E90)</name>
    <dbReference type="NCBI Taxonomy" id="1285928"/>
    <lineage>
        <taxon>Bacteria</taxon>
        <taxon>Pseudomonadati</taxon>
        <taxon>Bacteroidota</taxon>
        <taxon>Chitinophagia</taxon>
        <taxon>Chitinophagales</taxon>
        <taxon>Chitinophagaceae</taxon>
        <taxon>Niabella</taxon>
    </lineage>
</organism>
<proteinExistence type="evidence at protein level"/>
<evidence type="ECO:0000250" key="1">
    <source>
        <dbReference type="UniProtKB" id="A0A2T5Y4G4"/>
    </source>
</evidence>
<evidence type="ECO:0000255" key="2">
    <source>
        <dbReference type="PROSITE-ProRule" id="PRU00204"/>
    </source>
</evidence>
<evidence type="ECO:0000269" key="3">
    <source>
    </source>
</evidence>
<evidence type="ECO:0000303" key="4">
    <source>
    </source>
</evidence>
<evidence type="ECO:0000303" key="5">
    <source>
    </source>
</evidence>
<evidence type="ECO:0000305" key="6"/>
<evidence type="ECO:0000305" key="7">
    <source>
    </source>
</evidence>
<accession>A0A1G6LGU2</accession>
<gene>
    <name evidence="6" type="primary">cap12</name>
    <name type="ORF">SAMN04487894_102350</name>
</gene>
<dbReference type="EC" id="3.2.2.5" evidence="1"/>
<dbReference type="EMBL" id="FMZO01000002">
    <property type="protein sequence ID" value="SDC42652.1"/>
    <property type="molecule type" value="Genomic_DNA"/>
</dbReference>
<dbReference type="RefSeq" id="WP_090388962.1">
    <property type="nucleotide sequence ID" value="NZ_FMZO01000002.1"/>
</dbReference>
<dbReference type="SMR" id="A0A1G6LGU2"/>
<dbReference type="STRING" id="1285928.SAMN04487894_102350"/>
<dbReference type="OrthoDB" id="5497289at2"/>
<dbReference type="Proteomes" id="UP000198757">
    <property type="component" value="Unassembled WGS sequence"/>
</dbReference>
<dbReference type="GO" id="GO:0003953">
    <property type="term" value="F:NAD+ nucleosidase activity"/>
    <property type="evidence" value="ECO:0007669"/>
    <property type="project" value="UniProtKB-EC"/>
</dbReference>
<dbReference type="GO" id="GO:0050135">
    <property type="term" value="F:NADP+ nucleosidase activity"/>
    <property type="evidence" value="ECO:0007669"/>
    <property type="project" value="InterPro"/>
</dbReference>
<dbReference type="GO" id="GO:0000166">
    <property type="term" value="F:nucleotide binding"/>
    <property type="evidence" value="ECO:0007669"/>
    <property type="project" value="UniProtKB-KW"/>
</dbReference>
<dbReference type="GO" id="GO:0051607">
    <property type="term" value="P:defense response to virus"/>
    <property type="evidence" value="ECO:0007669"/>
    <property type="project" value="UniProtKB-KW"/>
</dbReference>
<dbReference type="CDD" id="cd22659">
    <property type="entry name" value="STING_bact-like"/>
    <property type="match status" value="1"/>
</dbReference>
<dbReference type="InterPro" id="IPR019302">
    <property type="entry name" value="CAP12/PCTIR_TIR_dom"/>
</dbReference>
<dbReference type="InterPro" id="IPR046876">
    <property type="entry name" value="Prok_STING"/>
</dbReference>
<dbReference type="Pfam" id="PF10137">
    <property type="entry name" value="CAP12-PCTIR_TIR"/>
    <property type="match status" value="1"/>
</dbReference>
<dbReference type="Pfam" id="PF20300">
    <property type="entry name" value="prok_STING"/>
    <property type="match status" value="1"/>
</dbReference>
<name>CAP12_NIADE</name>
<protein>
    <recommendedName>
        <fullName evidence="6">CD-NTase-associated protein 12</fullName>
        <shortName evidence="6">Cap12</shortName>
    </recommendedName>
    <alternativeName>
        <fullName evidence="1">NAD(+) hydrolase</fullName>
        <ecNumber evidence="1">3.2.2.5</ecNumber>
    </alternativeName>
    <alternativeName>
        <fullName evidence="5">TIR-STING</fullName>
        <shortName evidence="5">NdSTING</shortName>
    </alternativeName>
</protein>
<sequence>MIKKRLFIGSSSEELKTAEIVKEVLLKDFEVTIWNDNVWDTAVFKINQNFLADLLKASLQFDFGILIGTKDDKVMFREVEMIQPRDNVLFELGLFTGRLGTSKCAFLIDKEIKLPSDFNGLTLARFDSTNEATVIAGANSIKDLFLASADDEINFFPSATLASVYYENLIVPICRFIIDNNGFTKGDTHYQKCKLNIIVPERINQDVNLQFEKLKGLFTTENVSFKYSGRPRQISVDTQIKNDTLEFIDFPTIITGINHAISNLLPNDFNKQSPDYSSILDRELRRFITTLKKLLIRGGFDEMVNVKRDSEL</sequence>
<reference key="1">
    <citation type="submission" date="2016-10" db="EMBL/GenBank/DDBJ databases">
        <authorList>
            <person name="Varghese N."/>
        </authorList>
    </citation>
    <scope>NUCLEOTIDE SEQUENCE [LARGE SCALE GENOMIC DNA]</scope>
    <source>
        <strain>DSM 25811 / CCM 8410 / CCUG 62505 / LMG 26954 / E90</strain>
    </source>
</reference>
<reference key="2">
    <citation type="journal article" date="2020" name="Nature">
        <title>STING cyclic dinucleotide sensing originated in bacteria.</title>
        <authorList>
            <person name="Morehouse B.R."/>
            <person name="Govande A.A."/>
            <person name="Millman A."/>
            <person name="Keszei A.F.A."/>
            <person name="Lowey B."/>
            <person name="Ofir G."/>
            <person name="Shao S."/>
            <person name="Sorek R."/>
            <person name="Kranzusch P.J."/>
        </authorList>
    </citation>
    <scope>C-DI-GMP-BINDING</scope>
    <scope>DOMAIN</scope>
</reference>
<reference key="3">
    <citation type="journal article" date="2020" name="Nat. Microbiol.">
        <title>Diversity and classification of cyclic-oligonucleotide-based anti-phage signalling systems.</title>
        <authorList>
            <person name="Millman A."/>
            <person name="Melamed S."/>
            <person name="Amitai G."/>
            <person name="Sorek R."/>
        </authorList>
    </citation>
    <scope>CLASSIFICATION AND NOMENCLATURE</scope>
</reference>
<keyword id="KW-0051">Antiviral defense</keyword>
<keyword id="KW-0378">Hydrolase</keyword>
<keyword id="KW-0547">Nucleotide-binding</keyword>
<keyword id="KW-1185">Reference proteome</keyword>
<comment type="function">
    <text evidence="1 4 7">Effector protein of a CBASS antiviral system with NAD(+) hydrolase activity (By similarity). CBASS (cyclic oligonucleotide-based antiphage signaling system) provides immunity against bacteriophage. The CD-NTase protein synthesizes cyclic nucleotides in response to infection; these serve as specific second messenger signals. The signals activate a diverse range of effectors, leading to bacterial cell death and thus abortive phage infection. A type I-D CBASS(GG) system (PubMed:32839535).</text>
</comment>
<comment type="function">
    <text evidence="1 3">Binds c-di-GMP, does not bind cUMP-AMP (PubMed:32877915). Upon activation by c-di-GMP forms filaments which hydrolyze NAD(+); filament formation is required for enzyme activation (By similarity).</text>
</comment>
<comment type="catalytic activity">
    <reaction evidence="1">
        <text>NAD(+) + H2O = ADP-D-ribose + nicotinamide + H(+)</text>
        <dbReference type="Rhea" id="RHEA:16301"/>
        <dbReference type="ChEBI" id="CHEBI:15377"/>
        <dbReference type="ChEBI" id="CHEBI:15378"/>
        <dbReference type="ChEBI" id="CHEBI:17154"/>
        <dbReference type="ChEBI" id="CHEBI:57540"/>
        <dbReference type="ChEBI" id="CHEBI:57967"/>
        <dbReference type="EC" id="3.2.2.5"/>
    </reaction>
</comment>
<comment type="activity regulation">
    <text evidence="1 7">NAD(+) hydrolase activity is strongly stimulated by c-di-GMP, weakly by 3'3'-cGAMP, very weakly by c-di-AMP but not at all by 2'3'-cGAMP (Probable). Self-association of TIR domains is required for NADase activity (By similarity).</text>
</comment>
<comment type="subunit">
    <text evidence="1">Forms homodimers; in the presence of c-di-GMP forms filaments with an ordered array of parallel-stacked subunits.</text>
</comment>
<comment type="domain">
    <text evidence="1 7">The N-terminal TIR domain mediates NAD(+) hydrolase (NADase) activity. The cyclic nucleotide binds in the C-terminal bacterial STING region (PubMed:32877915). Upon binding to c-di-GMP the STING region closes around the ligand, which is bound by residues from 2 adjacent subunits. STING-STING interactions are the main drivers of filamentation; rearrangements in the STING domain allow reorganization of packing of the TIR domains, forming the NADase active site; cross-filament contacts strengthen the assembly (By similarity).</text>
</comment>
<comment type="similarity">
    <text evidence="6">In the C-terminal section; belongs to the bacterial STING family.</text>
</comment>